<keyword id="KW-0687">Ribonucleoprotein</keyword>
<keyword id="KW-0689">Ribosomal protein</keyword>
<keyword id="KW-0694">RNA-binding</keyword>
<keyword id="KW-0699">rRNA-binding</keyword>
<accession>B5ELY3</accession>
<proteinExistence type="inferred from homology"/>
<dbReference type="EMBL" id="CP001132">
    <property type="protein sequence ID" value="ACH82755.1"/>
    <property type="molecule type" value="Genomic_DNA"/>
</dbReference>
<dbReference type="RefSeq" id="WP_009565435.1">
    <property type="nucleotide sequence ID" value="NC_011206.1"/>
</dbReference>
<dbReference type="SMR" id="B5ELY3"/>
<dbReference type="GeneID" id="65279710"/>
<dbReference type="KEGG" id="afe:Lferr_0501"/>
<dbReference type="eggNOG" id="COG0185">
    <property type="taxonomic scope" value="Bacteria"/>
</dbReference>
<dbReference type="HOGENOM" id="CLU_144911_0_1_6"/>
<dbReference type="GO" id="GO:0005737">
    <property type="term" value="C:cytoplasm"/>
    <property type="evidence" value="ECO:0007669"/>
    <property type="project" value="UniProtKB-ARBA"/>
</dbReference>
<dbReference type="GO" id="GO:0015935">
    <property type="term" value="C:small ribosomal subunit"/>
    <property type="evidence" value="ECO:0007669"/>
    <property type="project" value="InterPro"/>
</dbReference>
<dbReference type="GO" id="GO:0019843">
    <property type="term" value="F:rRNA binding"/>
    <property type="evidence" value="ECO:0007669"/>
    <property type="project" value="UniProtKB-UniRule"/>
</dbReference>
<dbReference type="GO" id="GO:0003735">
    <property type="term" value="F:structural constituent of ribosome"/>
    <property type="evidence" value="ECO:0007669"/>
    <property type="project" value="InterPro"/>
</dbReference>
<dbReference type="GO" id="GO:0000028">
    <property type="term" value="P:ribosomal small subunit assembly"/>
    <property type="evidence" value="ECO:0007669"/>
    <property type="project" value="TreeGrafter"/>
</dbReference>
<dbReference type="GO" id="GO:0006412">
    <property type="term" value="P:translation"/>
    <property type="evidence" value="ECO:0007669"/>
    <property type="project" value="UniProtKB-UniRule"/>
</dbReference>
<dbReference type="FunFam" id="3.30.860.10:FF:000001">
    <property type="entry name" value="30S ribosomal protein S19"/>
    <property type="match status" value="1"/>
</dbReference>
<dbReference type="Gene3D" id="3.30.860.10">
    <property type="entry name" value="30s Ribosomal Protein S19, Chain A"/>
    <property type="match status" value="1"/>
</dbReference>
<dbReference type="HAMAP" id="MF_00531">
    <property type="entry name" value="Ribosomal_uS19"/>
    <property type="match status" value="1"/>
</dbReference>
<dbReference type="InterPro" id="IPR002222">
    <property type="entry name" value="Ribosomal_uS19"/>
</dbReference>
<dbReference type="InterPro" id="IPR005732">
    <property type="entry name" value="Ribosomal_uS19_bac-type"/>
</dbReference>
<dbReference type="InterPro" id="IPR020934">
    <property type="entry name" value="Ribosomal_uS19_CS"/>
</dbReference>
<dbReference type="InterPro" id="IPR023575">
    <property type="entry name" value="Ribosomal_uS19_SF"/>
</dbReference>
<dbReference type="NCBIfam" id="TIGR01050">
    <property type="entry name" value="rpsS_bact"/>
    <property type="match status" value="1"/>
</dbReference>
<dbReference type="PANTHER" id="PTHR11880">
    <property type="entry name" value="RIBOSOMAL PROTEIN S19P FAMILY MEMBER"/>
    <property type="match status" value="1"/>
</dbReference>
<dbReference type="PANTHER" id="PTHR11880:SF8">
    <property type="entry name" value="SMALL RIBOSOMAL SUBUNIT PROTEIN US19M"/>
    <property type="match status" value="1"/>
</dbReference>
<dbReference type="Pfam" id="PF00203">
    <property type="entry name" value="Ribosomal_S19"/>
    <property type="match status" value="1"/>
</dbReference>
<dbReference type="PIRSF" id="PIRSF002144">
    <property type="entry name" value="Ribosomal_S19"/>
    <property type="match status" value="1"/>
</dbReference>
<dbReference type="PRINTS" id="PR00975">
    <property type="entry name" value="RIBOSOMALS19"/>
</dbReference>
<dbReference type="SUPFAM" id="SSF54570">
    <property type="entry name" value="Ribosomal protein S19"/>
    <property type="match status" value="1"/>
</dbReference>
<dbReference type="PROSITE" id="PS00323">
    <property type="entry name" value="RIBOSOMAL_S19"/>
    <property type="match status" value="1"/>
</dbReference>
<protein>
    <recommendedName>
        <fullName evidence="1">Small ribosomal subunit protein uS19</fullName>
    </recommendedName>
    <alternativeName>
        <fullName evidence="3">30S ribosomal protein S19</fullName>
    </alternativeName>
</protein>
<evidence type="ECO:0000255" key="1">
    <source>
        <dbReference type="HAMAP-Rule" id="MF_00531"/>
    </source>
</evidence>
<evidence type="ECO:0000256" key="2">
    <source>
        <dbReference type="SAM" id="MobiDB-lite"/>
    </source>
</evidence>
<evidence type="ECO:0000305" key="3"/>
<name>RS19_ACIF5</name>
<feature type="chain" id="PRO_1000127918" description="Small ribosomal subunit protein uS19">
    <location>
        <begin position="1"/>
        <end position="91"/>
    </location>
</feature>
<feature type="region of interest" description="Disordered" evidence="2">
    <location>
        <begin position="1"/>
        <end position="32"/>
    </location>
</feature>
<feature type="compositionally biased region" description="Basic and acidic residues" evidence="2">
    <location>
        <begin position="9"/>
        <end position="19"/>
    </location>
</feature>
<reference key="1">
    <citation type="submission" date="2008-08" db="EMBL/GenBank/DDBJ databases">
        <title>Complete sequence of Acidithiobacillus ferrooxidans ATCC 53993.</title>
        <authorList>
            <person name="Lucas S."/>
            <person name="Copeland A."/>
            <person name="Lapidus A."/>
            <person name="Glavina del Rio T."/>
            <person name="Dalin E."/>
            <person name="Tice H."/>
            <person name="Bruce D."/>
            <person name="Goodwin L."/>
            <person name="Pitluck S."/>
            <person name="Sims D."/>
            <person name="Brettin T."/>
            <person name="Detter J.C."/>
            <person name="Han C."/>
            <person name="Kuske C.R."/>
            <person name="Larimer F."/>
            <person name="Land M."/>
            <person name="Hauser L."/>
            <person name="Kyrpides N."/>
            <person name="Lykidis A."/>
            <person name="Borole A.P."/>
        </authorList>
    </citation>
    <scope>NUCLEOTIDE SEQUENCE [LARGE SCALE GENOMIC DNA]</scope>
    <source>
        <strain>ATCC 53993 / BNL-5-31</strain>
    </source>
</reference>
<comment type="function">
    <text evidence="1">Protein S19 forms a complex with S13 that binds strongly to the 16S ribosomal RNA.</text>
</comment>
<comment type="similarity">
    <text evidence="1">Belongs to the universal ribosomal protein uS19 family.</text>
</comment>
<sequence>MPRSIKKGPFIDEHLDRKVQSAQASNSRRPIKTWSRRSTITPDFIGLTISVHNGRQHIPVVVNENMVGHKLGEFALTRTFKGHVADKKAKR</sequence>
<gene>
    <name evidence="1" type="primary">rpsS</name>
    <name type="ordered locus">Lferr_0501</name>
</gene>
<organism>
    <name type="scientific">Acidithiobacillus ferrooxidans (strain ATCC 53993 / BNL-5-31)</name>
    <name type="common">Leptospirillum ferrooxidans (ATCC 53993)</name>
    <dbReference type="NCBI Taxonomy" id="380394"/>
    <lineage>
        <taxon>Bacteria</taxon>
        <taxon>Pseudomonadati</taxon>
        <taxon>Pseudomonadota</taxon>
        <taxon>Acidithiobacillia</taxon>
        <taxon>Acidithiobacillales</taxon>
        <taxon>Acidithiobacillaceae</taxon>
        <taxon>Acidithiobacillus</taxon>
    </lineage>
</organism>